<sequence length="106" mass="11755">MARKIKKGDTVKVLSGKDKGKTGEVVTVIPKEDKVVVRGVNIVKRHQRPNAQMRQGGIIEKEAPIYVCKVALVCPSCGQATRVGFRFLDDGRKVRYCKKCGEVIDK</sequence>
<protein>
    <recommendedName>
        <fullName evidence="1">Large ribosomal subunit protein uL24</fullName>
    </recommendedName>
    <alternativeName>
        <fullName evidence="2">50S ribosomal protein L24</fullName>
    </alternativeName>
</protein>
<gene>
    <name evidence="1" type="primary">rplX</name>
    <name type="ordered locus">Tmel_0964</name>
</gene>
<accession>A6LLM4</accession>
<keyword id="KW-0687">Ribonucleoprotein</keyword>
<keyword id="KW-0689">Ribosomal protein</keyword>
<keyword id="KW-0694">RNA-binding</keyword>
<keyword id="KW-0699">rRNA-binding</keyword>
<proteinExistence type="inferred from homology"/>
<dbReference type="EMBL" id="CP000716">
    <property type="protein sequence ID" value="ABR30825.1"/>
    <property type="molecule type" value="Genomic_DNA"/>
</dbReference>
<dbReference type="RefSeq" id="WP_012057186.1">
    <property type="nucleotide sequence ID" value="NC_009616.1"/>
</dbReference>
<dbReference type="SMR" id="A6LLM4"/>
<dbReference type="STRING" id="391009.Tmel_0964"/>
<dbReference type="KEGG" id="tme:Tmel_0964"/>
<dbReference type="eggNOG" id="COG0198">
    <property type="taxonomic scope" value="Bacteria"/>
</dbReference>
<dbReference type="HOGENOM" id="CLU_093315_2_0_0"/>
<dbReference type="OrthoDB" id="9807419at2"/>
<dbReference type="Proteomes" id="UP000001110">
    <property type="component" value="Chromosome"/>
</dbReference>
<dbReference type="GO" id="GO:1990904">
    <property type="term" value="C:ribonucleoprotein complex"/>
    <property type="evidence" value="ECO:0007669"/>
    <property type="project" value="UniProtKB-KW"/>
</dbReference>
<dbReference type="GO" id="GO:0005840">
    <property type="term" value="C:ribosome"/>
    <property type="evidence" value="ECO:0007669"/>
    <property type="project" value="UniProtKB-KW"/>
</dbReference>
<dbReference type="GO" id="GO:0019843">
    <property type="term" value="F:rRNA binding"/>
    <property type="evidence" value="ECO:0007669"/>
    <property type="project" value="UniProtKB-UniRule"/>
</dbReference>
<dbReference type="GO" id="GO:0003735">
    <property type="term" value="F:structural constituent of ribosome"/>
    <property type="evidence" value="ECO:0007669"/>
    <property type="project" value="InterPro"/>
</dbReference>
<dbReference type="GO" id="GO:0006412">
    <property type="term" value="P:translation"/>
    <property type="evidence" value="ECO:0007669"/>
    <property type="project" value="UniProtKB-UniRule"/>
</dbReference>
<dbReference type="CDD" id="cd06089">
    <property type="entry name" value="KOW_RPL26"/>
    <property type="match status" value="1"/>
</dbReference>
<dbReference type="FunFam" id="2.30.30.30:FF:000004">
    <property type="entry name" value="50S ribosomal protein L24"/>
    <property type="match status" value="1"/>
</dbReference>
<dbReference type="Gene3D" id="2.30.30.30">
    <property type="match status" value="1"/>
</dbReference>
<dbReference type="HAMAP" id="MF_01326_B">
    <property type="entry name" value="Ribosomal_uL24_B"/>
    <property type="match status" value="1"/>
</dbReference>
<dbReference type="InterPro" id="IPR005824">
    <property type="entry name" value="KOW"/>
</dbReference>
<dbReference type="InterPro" id="IPR014722">
    <property type="entry name" value="Rib_uL2_dom2"/>
</dbReference>
<dbReference type="InterPro" id="IPR003256">
    <property type="entry name" value="Ribosomal_uL24"/>
</dbReference>
<dbReference type="InterPro" id="IPR005825">
    <property type="entry name" value="Ribosomal_uL24_CS"/>
</dbReference>
<dbReference type="InterPro" id="IPR041988">
    <property type="entry name" value="Ribosomal_uL24_KOW"/>
</dbReference>
<dbReference type="InterPro" id="IPR008991">
    <property type="entry name" value="Translation_prot_SH3-like_sf"/>
</dbReference>
<dbReference type="NCBIfam" id="TIGR01079">
    <property type="entry name" value="rplX_bact"/>
    <property type="match status" value="1"/>
</dbReference>
<dbReference type="PANTHER" id="PTHR12903">
    <property type="entry name" value="MITOCHONDRIAL RIBOSOMAL PROTEIN L24"/>
    <property type="match status" value="1"/>
</dbReference>
<dbReference type="Pfam" id="PF00467">
    <property type="entry name" value="KOW"/>
    <property type="match status" value="1"/>
</dbReference>
<dbReference type="Pfam" id="PF17136">
    <property type="entry name" value="ribosomal_L24"/>
    <property type="match status" value="1"/>
</dbReference>
<dbReference type="SMART" id="SM00739">
    <property type="entry name" value="KOW"/>
    <property type="match status" value="1"/>
</dbReference>
<dbReference type="SUPFAM" id="SSF50104">
    <property type="entry name" value="Translation proteins SH3-like domain"/>
    <property type="match status" value="1"/>
</dbReference>
<dbReference type="PROSITE" id="PS01108">
    <property type="entry name" value="RIBOSOMAL_L24"/>
    <property type="match status" value="1"/>
</dbReference>
<evidence type="ECO:0000255" key="1">
    <source>
        <dbReference type="HAMAP-Rule" id="MF_01326"/>
    </source>
</evidence>
<evidence type="ECO:0000305" key="2"/>
<reference key="1">
    <citation type="submission" date="2007-05" db="EMBL/GenBank/DDBJ databases">
        <title>Complete sequence of Thermosipho melanesiensis BI429.</title>
        <authorList>
            <consortium name="US DOE Joint Genome Institute"/>
            <person name="Copeland A."/>
            <person name="Lucas S."/>
            <person name="Lapidus A."/>
            <person name="Barry K."/>
            <person name="Glavina del Rio T."/>
            <person name="Dalin E."/>
            <person name="Tice H."/>
            <person name="Pitluck S."/>
            <person name="Chertkov O."/>
            <person name="Brettin T."/>
            <person name="Bruce D."/>
            <person name="Detter J.C."/>
            <person name="Han C."/>
            <person name="Schmutz J."/>
            <person name="Larimer F."/>
            <person name="Land M."/>
            <person name="Hauser L."/>
            <person name="Kyrpides N."/>
            <person name="Mikhailova N."/>
            <person name="Nelson K."/>
            <person name="Gogarten J.P."/>
            <person name="Noll K."/>
            <person name="Richardson P."/>
        </authorList>
    </citation>
    <scope>NUCLEOTIDE SEQUENCE [LARGE SCALE GENOMIC DNA]</scope>
    <source>
        <strain>DSM 12029 / CIP 104789 / BI429</strain>
    </source>
</reference>
<comment type="function">
    <text evidence="1">One of two assembly initiator proteins, it binds directly to the 5'-end of the 23S rRNA, where it nucleates assembly of the 50S subunit.</text>
</comment>
<comment type="function">
    <text evidence="1">One of the proteins that surrounds the polypeptide exit tunnel on the outside of the subunit.</text>
</comment>
<comment type="subunit">
    <text evidence="1">Part of the 50S ribosomal subunit.</text>
</comment>
<comment type="similarity">
    <text evidence="1">Belongs to the universal ribosomal protein uL24 family.</text>
</comment>
<name>RL24_THEM4</name>
<feature type="chain" id="PRO_0000355726" description="Large ribosomal subunit protein uL24">
    <location>
        <begin position="1"/>
        <end position="106"/>
    </location>
</feature>
<organism>
    <name type="scientific">Thermosipho melanesiensis (strain DSM 12029 / CIP 104789 / BI429)</name>
    <dbReference type="NCBI Taxonomy" id="391009"/>
    <lineage>
        <taxon>Bacteria</taxon>
        <taxon>Thermotogati</taxon>
        <taxon>Thermotogota</taxon>
        <taxon>Thermotogae</taxon>
        <taxon>Thermotogales</taxon>
        <taxon>Fervidobacteriaceae</taxon>
        <taxon>Thermosipho</taxon>
    </lineage>
</organism>